<name>RS3A_THEAC</name>
<gene>
    <name evidence="1" type="primary">rps3ae</name>
    <name type="ordered locus">Ta1167</name>
</gene>
<comment type="similarity">
    <text evidence="1">Belongs to the eukaryotic ribosomal protein eS1 family.</text>
</comment>
<evidence type="ECO:0000255" key="1">
    <source>
        <dbReference type="HAMAP-Rule" id="MF_00359"/>
    </source>
</evidence>
<evidence type="ECO:0000256" key="2">
    <source>
        <dbReference type="SAM" id="MobiDB-lite"/>
    </source>
</evidence>
<evidence type="ECO:0000305" key="3"/>
<organism>
    <name type="scientific">Thermoplasma acidophilum (strain ATCC 25905 / DSM 1728 / JCM 9062 / NBRC 15155 / AMRC-C165)</name>
    <dbReference type="NCBI Taxonomy" id="273075"/>
    <lineage>
        <taxon>Archaea</taxon>
        <taxon>Methanobacteriati</taxon>
        <taxon>Thermoplasmatota</taxon>
        <taxon>Thermoplasmata</taxon>
        <taxon>Thermoplasmatales</taxon>
        <taxon>Thermoplasmataceae</taxon>
        <taxon>Thermoplasma</taxon>
    </lineage>
</organism>
<reference key="1">
    <citation type="journal article" date="2000" name="Nature">
        <title>The genome sequence of the thermoacidophilic scavenger Thermoplasma acidophilum.</title>
        <authorList>
            <person name="Ruepp A."/>
            <person name="Graml W."/>
            <person name="Santos-Martinez M.-L."/>
            <person name="Koretke K.K."/>
            <person name="Volker C."/>
            <person name="Mewes H.-W."/>
            <person name="Frishman D."/>
            <person name="Stocker S."/>
            <person name="Lupas A.N."/>
            <person name="Baumeister W."/>
        </authorList>
    </citation>
    <scope>NUCLEOTIDE SEQUENCE [LARGE SCALE GENOMIC DNA]</scope>
    <source>
        <strain>ATCC 25905 / DSM 1728 / JCM 9062 / NBRC 15155 / AMRC-C165</strain>
    </source>
</reference>
<keyword id="KW-1185">Reference proteome</keyword>
<keyword id="KW-0687">Ribonucleoprotein</keyword>
<keyword id="KW-0689">Ribosomal protein</keyword>
<dbReference type="EMBL" id="AL445066">
    <property type="protein sequence ID" value="CAC12292.1"/>
    <property type="molecule type" value="Genomic_DNA"/>
</dbReference>
<dbReference type="RefSeq" id="WP_010901574.1">
    <property type="nucleotide sequence ID" value="NC_002578.1"/>
</dbReference>
<dbReference type="SMR" id="Q9HJ08"/>
<dbReference type="FunCoup" id="Q9HJ08">
    <property type="interactions" value="144"/>
</dbReference>
<dbReference type="STRING" id="273075.gene:9572388"/>
<dbReference type="PaxDb" id="273075-Ta1167"/>
<dbReference type="DNASU" id="1456666"/>
<dbReference type="EnsemblBacteria" id="CAC12292">
    <property type="protein sequence ID" value="CAC12292"/>
    <property type="gene ID" value="CAC12292"/>
</dbReference>
<dbReference type="KEGG" id="tac:Ta1167"/>
<dbReference type="eggNOG" id="arCOG04186">
    <property type="taxonomic scope" value="Archaea"/>
</dbReference>
<dbReference type="HOGENOM" id="CLU_062507_1_0_2"/>
<dbReference type="InParanoid" id="Q9HJ08"/>
<dbReference type="OrthoDB" id="30639at2157"/>
<dbReference type="Proteomes" id="UP000001024">
    <property type="component" value="Chromosome"/>
</dbReference>
<dbReference type="GO" id="GO:1990904">
    <property type="term" value="C:ribonucleoprotein complex"/>
    <property type="evidence" value="ECO:0007669"/>
    <property type="project" value="UniProtKB-KW"/>
</dbReference>
<dbReference type="GO" id="GO:0005840">
    <property type="term" value="C:ribosome"/>
    <property type="evidence" value="ECO:0007669"/>
    <property type="project" value="UniProtKB-KW"/>
</dbReference>
<dbReference type="GO" id="GO:0003735">
    <property type="term" value="F:structural constituent of ribosome"/>
    <property type="evidence" value="ECO:0007669"/>
    <property type="project" value="InterPro"/>
</dbReference>
<dbReference type="GO" id="GO:0006412">
    <property type="term" value="P:translation"/>
    <property type="evidence" value="ECO:0007669"/>
    <property type="project" value="UniProtKB-UniRule"/>
</dbReference>
<dbReference type="HAMAP" id="MF_00359">
    <property type="entry name" value="Ribosomal_eS1"/>
    <property type="match status" value="1"/>
</dbReference>
<dbReference type="InterPro" id="IPR001593">
    <property type="entry name" value="Ribosomal_eS1"/>
</dbReference>
<dbReference type="InterPro" id="IPR030838">
    <property type="entry name" value="Ribosomal_eS1_arc"/>
</dbReference>
<dbReference type="NCBIfam" id="NF003142">
    <property type="entry name" value="PRK04057.1"/>
    <property type="match status" value="1"/>
</dbReference>
<dbReference type="Pfam" id="PF01015">
    <property type="entry name" value="Ribosomal_S3Ae"/>
    <property type="match status" value="1"/>
</dbReference>
<dbReference type="SMART" id="SM01397">
    <property type="entry name" value="Ribosomal_S3Ae"/>
    <property type="match status" value="1"/>
</dbReference>
<accession>Q9HJ08</accession>
<proteinExistence type="inferred from homology"/>
<protein>
    <recommendedName>
        <fullName evidence="1">Small ribosomal subunit protein eS1</fullName>
    </recommendedName>
    <alternativeName>
        <fullName evidence="3">30S ribosomal protein S3Ae</fullName>
    </alternativeName>
    <alternativeName>
        <fullName evidence="1">Ribosomal protein S1e</fullName>
    </alternativeName>
</protein>
<sequence>MAGEKAQKKGKEKWKEKTWYTVESPPYLGSKEVTVALGEDPESMVNRIVEVPISDLTGNFKKSNEKALFRITGCEGTKCKTIFIGHYIGDDYIRRLVRRRKERIDIIEDVKTSDGSIITVKIVVVSDGKLTNTKKSEIRKALTSFIVSKGSQLSYADFVRYLIGDDSYNDMVEATKNIYPLRKIEIRKSELVSLSGMQEPQKNEPAPGGEAIAQN</sequence>
<feature type="chain" id="PRO_0000153563" description="Small ribosomal subunit protein eS1">
    <location>
        <begin position="1"/>
        <end position="215"/>
    </location>
</feature>
<feature type="region of interest" description="Disordered" evidence="2">
    <location>
        <begin position="195"/>
        <end position="215"/>
    </location>
</feature>